<comment type="subcellular location">
    <subcellularLocation>
        <location>Plastid</location>
        <location>Chloroplast</location>
    </subcellularLocation>
</comment>
<comment type="similarity">
    <text evidence="1">Belongs to the bacterial ribosomal protein bL33 family.</text>
</comment>
<evidence type="ECO:0000305" key="1"/>
<accession>Q9TM38</accession>
<sequence length="64" mass="7608">MVKHKAARICINLECIDCKSNLHKRSNGISRYTTIKNRKNNPSRMELKKFCPYCNMRTIHKEIK</sequence>
<organism>
    <name type="scientific">Cyanidium caldarium</name>
    <name type="common">Red alga</name>
    <dbReference type="NCBI Taxonomy" id="2771"/>
    <lineage>
        <taxon>Eukaryota</taxon>
        <taxon>Rhodophyta</taxon>
        <taxon>Bangiophyceae</taxon>
        <taxon>Cyanidiales</taxon>
        <taxon>Cyanidiaceae</taxon>
        <taxon>Cyanidium</taxon>
    </lineage>
</organism>
<name>RK33_CYACA</name>
<reference key="1">
    <citation type="journal article" date="2000" name="J. Mol. Evol.">
        <title>The structure and gene repertoire of an ancient red algal plastid genome.</title>
        <authorList>
            <person name="Gloeckner G."/>
            <person name="Rosenthal A."/>
            <person name="Valentin K.-U."/>
        </authorList>
    </citation>
    <scope>NUCLEOTIDE SEQUENCE [LARGE SCALE GENOMIC DNA]</scope>
    <source>
        <strain>RK-1</strain>
    </source>
</reference>
<gene>
    <name type="primary">rpl33</name>
</gene>
<keyword id="KW-0150">Chloroplast</keyword>
<keyword id="KW-0934">Plastid</keyword>
<keyword id="KW-0687">Ribonucleoprotein</keyword>
<keyword id="KW-0689">Ribosomal protein</keyword>
<dbReference type="EMBL" id="AF022186">
    <property type="protein sequence ID" value="AAF13017.1"/>
    <property type="molecule type" value="Genomic_DNA"/>
</dbReference>
<dbReference type="RefSeq" id="NP_045028.1">
    <property type="nucleotide sequence ID" value="NC_001840.1"/>
</dbReference>
<dbReference type="GeneID" id="800174"/>
<dbReference type="GO" id="GO:0009507">
    <property type="term" value="C:chloroplast"/>
    <property type="evidence" value="ECO:0007669"/>
    <property type="project" value="UniProtKB-SubCell"/>
</dbReference>
<dbReference type="GO" id="GO:1990904">
    <property type="term" value="C:ribonucleoprotein complex"/>
    <property type="evidence" value="ECO:0007669"/>
    <property type="project" value="UniProtKB-KW"/>
</dbReference>
<dbReference type="GO" id="GO:0005840">
    <property type="term" value="C:ribosome"/>
    <property type="evidence" value="ECO:0007669"/>
    <property type="project" value="UniProtKB-KW"/>
</dbReference>
<dbReference type="GO" id="GO:0003735">
    <property type="term" value="F:structural constituent of ribosome"/>
    <property type="evidence" value="ECO:0007669"/>
    <property type="project" value="InterPro"/>
</dbReference>
<dbReference type="GO" id="GO:0006412">
    <property type="term" value="P:translation"/>
    <property type="evidence" value="ECO:0007669"/>
    <property type="project" value="UniProtKB-UniRule"/>
</dbReference>
<dbReference type="Gene3D" id="2.20.28.120">
    <property type="entry name" value="Ribosomal protein L33"/>
    <property type="match status" value="1"/>
</dbReference>
<dbReference type="HAMAP" id="MF_00294">
    <property type="entry name" value="Ribosomal_bL33"/>
    <property type="match status" value="1"/>
</dbReference>
<dbReference type="InterPro" id="IPR001705">
    <property type="entry name" value="Ribosomal_bL33"/>
</dbReference>
<dbReference type="InterPro" id="IPR018264">
    <property type="entry name" value="Ribosomal_bL33_CS"/>
</dbReference>
<dbReference type="InterPro" id="IPR038584">
    <property type="entry name" value="Ribosomal_bL33_sf"/>
</dbReference>
<dbReference type="InterPro" id="IPR011332">
    <property type="entry name" value="Ribosomal_zn-bd"/>
</dbReference>
<dbReference type="NCBIfam" id="NF001764">
    <property type="entry name" value="PRK00504.1"/>
    <property type="match status" value="1"/>
</dbReference>
<dbReference type="NCBIfam" id="NF001860">
    <property type="entry name" value="PRK00595.1"/>
    <property type="match status" value="1"/>
</dbReference>
<dbReference type="NCBIfam" id="TIGR01023">
    <property type="entry name" value="rpmG_bact"/>
    <property type="match status" value="1"/>
</dbReference>
<dbReference type="PANTHER" id="PTHR43168">
    <property type="entry name" value="50S RIBOSOMAL PROTEIN L33, CHLOROPLASTIC"/>
    <property type="match status" value="1"/>
</dbReference>
<dbReference type="PANTHER" id="PTHR43168:SF2">
    <property type="entry name" value="LARGE RIBOSOMAL SUBUNIT PROTEIN BL33C"/>
    <property type="match status" value="1"/>
</dbReference>
<dbReference type="Pfam" id="PF00471">
    <property type="entry name" value="Ribosomal_L33"/>
    <property type="match status" value="1"/>
</dbReference>
<dbReference type="SUPFAM" id="SSF57829">
    <property type="entry name" value="Zn-binding ribosomal proteins"/>
    <property type="match status" value="1"/>
</dbReference>
<dbReference type="PROSITE" id="PS00582">
    <property type="entry name" value="RIBOSOMAL_L33"/>
    <property type="match status" value="1"/>
</dbReference>
<protein>
    <recommendedName>
        <fullName evidence="1">Large ribosomal subunit protein bL33c</fullName>
    </recommendedName>
    <alternativeName>
        <fullName>50S ribosomal protein L33, chloroplastic</fullName>
    </alternativeName>
</protein>
<geneLocation type="chloroplast"/>
<proteinExistence type="inferred from homology"/>
<feature type="chain" id="PRO_0000170279" description="Large ribosomal subunit protein bL33c">
    <location>
        <begin position="1"/>
        <end position="64"/>
    </location>
</feature>